<sequence length="244" mass="27302">MRIIVVDNYEEMSKKAAAMIASQVILKPDSVLGLATGDTPIGMYKEIINIYKNEKMNFSKVKTFNLDEYYGLNRENPQSYYYYMMNNLFNHVNIDKNNINIPNGMADNIEVECKEYERKIDKAGGIDLQILGIGVNGHIGFNEPNISFESETHLVNLNEKTIESNSRFFSSKEEVPTKAISMGIKSIIHSKKIILLACGSAKSDAVSKAINGKINPNIPASILQLHRDVVVIIDKEAASKLKLK</sequence>
<reference key="1">
    <citation type="journal article" date="2007" name="PLoS ONE">
        <title>Analysis of the neurotoxin complex genes in Clostridium botulinum A1-A4 and B1 strains: BoNT/A3, /Ba4 and /B1 clusters are located within plasmids.</title>
        <authorList>
            <person name="Smith T.J."/>
            <person name="Hill K.K."/>
            <person name="Foley B.T."/>
            <person name="Detter J.C."/>
            <person name="Munk A.C."/>
            <person name="Bruce D.C."/>
            <person name="Doggett N.A."/>
            <person name="Smith L.A."/>
            <person name="Marks J.D."/>
            <person name="Xie G."/>
            <person name="Brettin T.S."/>
        </authorList>
    </citation>
    <scope>NUCLEOTIDE SEQUENCE [LARGE SCALE GENOMIC DNA]</scope>
    <source>
        <strain>Okra / Type B1</strain>
    </source>
</reference>
<feature type="chain" id="PRO_1000139765" description="Glucosamine-6-phosphate deaminase">
    <location>
        <begin position="1"/>
        <end position="244"/>
    </location>
</feature>
<feature type="active site" description="Proton acceptor; for enolization step" evidence="1">
    <location>
        <position position="67"/>
    </location>
</feature>
<feature type="active site" description="For ring-opening step" evidence="1">
    <location>
        <position position="136"/>
    </location>
</feature>
<feature type="active site" description="Proton acceptor; for ring-opening step" evidence="1">
    <location>
        <position position="138"/>
    </location>
</feature>
<feature type="active site" description="For ring-opening step" evidence="1">
    <location>
        <position position="143"/>
    </location>
</feature>
<protein>
    <recommendedName>
        <fullName evidence="1">Glucosamine-6-phosphate deaminase</fullName>
        <ecNumber evidence="1">3.5.99.6</ecNumber>
    </recommendedName>
    <alternativeName>
        <fullName evidence="1">GlcN6P deaminase</fullName>
        <shortName evidence="1">GNPDA</shortName>
    </alternativeName>
    <alternativeName>
        <fullName evidence="1">Glucosamine-6-phosphate isomerase</fullName>
    </alternativeName>
</protein>
<comment type="function">
    <text evidence="1">Catalyzes the reversible isomerization-deamination of glucosamine 6-phosphate (GlcN6P) to form fructose 6-phosphate (Fru6P) and ammonium ion.</text>
</comment>
<comment type="catalytic activity">
    <reaction evidence="1">
        <text>alpha-D-glucosamine 6-phosphate + H2O = beta-D-fructose 6-phosphate + NH4(+)</text>
        <dbReference type="Rhea" id="RHEA:12172"/>
        <dbReference type="ChEBI" id="CHEBI:15377"/>
        <dbReference type="ChEBI" id="CHEBI:28938"/>
        <dbReference type="ChEBI" id="CHEBI:57634"/>
        <dbReference type="ChEBI" id="CHEBI:75989"/>
        <dbReference type="EC" id="3.5.99.6"/>
    </reaction>
</comment>
<comment type="pathway">
    <text evidence="1">Amino-sugar metabolism; N-acetylneuraminate degradation; D-fructose 6-phosphate from N-acetylneuraminate: step 5/5.</text>
</comment>
<comment type="similarity">
    <text evidence="1">Belongs to the glucosamine/galactosamine-6-phosphate isomerase family. NagB subfamily.</text>
</comment>
<name>NAGB_CLOBK</name>
<proteinExistence type="inferred from homology"/>
<keyword id="KW-0119">Carbohydrate metabolism</keyword>
<keyword id="KW-0378">Hydrolase</keyword>
<organism>
    <name type="scientific">Clostridium botulinum (strain Okra / Type B1)</name>
    <dbReference type="NCBI Taxonomy" id="498213"/>
    <lineage>
        <taxon>Bacteria</taxon>
        <taxon>Bacillati</taxon>
        <taxon>Bacillota</taxon>
        <taxon>Clostridia</taxon>
        <taxon>Eubacteriales</taxon>
        <taxon>Clostridiaceae</taxon>
        <taxon>Clostridium</taxon>
    </lineage>
</organism>
<gene>
    <name evidence="1" type="primary">nagB</name>
    <name type="ordered locus">CLD_1741</name>
</gene>
<accession>B1IKY4</accession>
<dbReference type="EC" id="3.5.99.6" evidence="1"/>
<dbReference type="EMBL" id="CP000939">
    <property type="protein sequence ID" value="ACA45523.1"/>
    <property type="molecule type" value="Genomic_DNA"/>
</dbReference>
<dbReference type="RefSeq" id="WP_003400051.1">
    <property type="nucleotide sequence ID" value="NC_010516.1"/>
</dbReference>
<dbReference type="SMR" id="B1IKY4"/>
<dbReference type="KEGG" id="cbb:CLD_1741"/>
<dbReference type="HOGENOM" id="CLU_049611_1_1_9"/>
<dbReference type="UniPathway" id="UPA00629">
    <property type="reaction ID" value="UER00684"/>
</dbReference>
<dbReference type="Proteomes" id="UP000008541">
    <property type="component" value="Chromosome"/>
</dbReference>
<dbReference type="GO" id="GO:0005737">
    <property type="term" value="C:cytoplasm"/>
    <property type="evidence" value="ECO:0007669"/>
    <property type="project" value="TreeGrafter"/>
</dbReference>
<dbReference type="GO" id="GO:0004342">
    <property type="term" value="F:glucosamine-6-phosphate deaminase activity"/>
    <property type="evidence" value="ECO:0007669"/>
    <property type="project" value="UniProtKB-UniRule"/>
</dbReference>
<dbReference type="GO" id="GO:0042802">
    <property type="term" value="F:identical protein binding"/>
    <property type="evidence" value="ECO:0007669"/>
    <property type="project" value="TreeGrafter"/>
</dbReference>
<dbReference type="GO" id="GO:0005975">
    <property type="term" value="P:carbohydrate metabolic process"/>
    <property type="evidence" value="ECO:0007669"/>
    <property type="project" value="InterPro"/>
</dbReference>
<dbReference type="GO" id="GO:0006043">
    <property type="term" value="P:glucosamine catabolic process"/>
    <property type="evidence" value="ECO:0007669"/>
    <property type="project" value="TreeGrafter"/>
</dbReference>
<dbReference type="GO" id="GO:0006046">
    <property type="term" value="P:N-acetylglucosamine catabolic process"/>
    <property type="evidence" value="ECO:0007669"/>
    <property type="project" value="TreeGrafter"/>
</dbReference>
<dbReference type="GO" id="GO:0019262">
    <property type="term" value="P:N-acetylneuraminate catabolic process"/>
    <property type="evidence" value="ECO:0007669"/>
    <property type="project" value="UniProtKB-UniRule"/>
</dbReference>
<dbReference type="CDD" id="cd01399">
    <property type="entry name" value="GlcN6P_deaminase"/>
    <property type="match status" value="1"/>
</dbReference>
<dbReference type="FunFam" id="3.40.50.1360:FF:000003">
    <property type="entry name" value="Glucosamine-6-phosphate deaminase"/>
    <property type="match status" value="1"/>
</dbReference>
<dbReference type="Gene3D" id="3.40.50.1360">
    <property type="match status" value="1"/>
</dbReference>
<dbReference type="HAMAP" id="MF_01241">
    <property type="entry name" value="GlcN6P_deamin"/>
    <property type="match status" value="1"/>
</dbReference>
<dbReference type="InterPro" id="IPR006148">
    <property type="entry name" value="Glc/Gal-6P_isomerase"/>
</dbReference>
<dbReference type="InterPro" id="IPR004547">
    <property type="entry name" value="Glucosamine6P_isomerase"/>
</dbReference>
<dbReference type="InterPro" id="IPR018321">
    <property type="entry name" value="Glucosamine6P_isomerase_CS"/>
</dbReference>
<dbReference type="InterPro" id="IPR037171">
    <property type="entry name" value="NagB/RpiA_transferase-like"/>
</dbReference>
<dbReference type="NCBIfam" id="TIGR00502">
    <property type="entry name" value="nagB"/>
    <property type="match status" value="1"/>
</dbReference>
<dbReference type="NCBIfam" id="NF001684">
    <property type="entry name" value="PRK00443.1-4"/>
    <property type="match status" value="1"/>
</dbReference>
<dbReference type="PANTHER" id="PTHR11280">
    <property type="entry name" value="GLUCOSAMINE-6-PHOSPHATE ISOMERASE"/>
    <property type="match status" value="1"/>
</dbReference>
<dbReference type="PANTHER" id="PTHR11280:SF5">
    <property type="entry name" value="GLUCOSAMINE-6-PHOSPHATE ISOMERASE"/>
    <property type="match status" value="1"/>
</dbReference>
<dbReference type="Pfam" id="PF01182">
    <property type="entry name" value="Glucosamine_iso"/>
    <property type="match status" value="1"/>
</dbReference>
<dbReference type="SUPFAM" id="SSF100950">
    <property type="entry name" value="NagB/RpiA/CoA transferase-like"/>
    <property type="match status" value="1"/>
</dbReference>
<dbReference type="PROSITE" id="PS01161">
    <property type="entry name" value="GLC_GALNAC_ISOMERASE"/>
    <property type="match status" value="1"/>
</dbReference>
<evidence type="ECO:0000255" key="1">
    <source>
        <dbReference type="HAMAP-Rule" id="MF_01241"/>
    </source>
</evidence>